<feature type="chain" id="PRO_0000301146" description="Sec-independent protein translocase protein TatB">
    <location>
        <begin position="1"/>
        <end position="175"/>
    </location>
</feature>
<feature type="transmembrane region" description="Helical" evidence="1">
    <location>
        <begin position="1"/>
        <end position="21"/>
    </location>
</feature>
<feature type="region of interest" description="Disordered" evidence="2">
    <location>
        <begin position="100"/>
        <end position="132"/>
    </location>
</feature>
<feature type="region of interest" description="Disordered" evidence="2">
    <location>
        <begin position="155"/>
        <end position="175"/>
    </location>
</feature>
<feature type="compositionally biased region" description="Low complexity" evidence="2">
    <location>
        <begin position="111"/>
        <end position="132"/>
    </location>
</feature>
<sequence length="175" mass="18545">MFDIGWSELVLIGVVALIAIGPKELPGVLRMVGQWMGKARKMAAEFQGQFQEAMREAEMADLKKSFDEVKEAASGFAGNNLMTSLQKDVSDALRVDALDKPAETSSTTAIEAPATSSEALTTPTTPEAPTPETFVEAEAHAAVNEPLAITREVEQAPVVAQDTAPSEAIKDAKAS</sequence>
<evidence type="ECO:0000255" key="1">
    <source>
        <dbReference type="HAMAP-Rule" id="MF_00237"/>
    </source>
</evidence>
<evidence type="ECO:0000256" key="2">
    <source>
        <dbReference type="SAM" id="MobiDB-lite"/>
    </source>
</evidence>
<dbReference type="EMBL" id="BA000040">
    <property type="protein sequence ID" value="BAC50015.1"/>
    <property type="molecule type" value="Genomic_DNA"/>
</dbReference>
<dbReference type="RefSeq" id="NP_771390.1">
    <property type="nucleotide sequence ID" value="NC_004463.1"/>
</dbReference>
<dbReference type="RefSeq" id="WP_011087518.1">
    <property type="nucleotide sequence ID" value="NC_004463.1"/>
</dbReference>
<dbReference type="SMR" id="Q89KZ8"/>
<dbReference type="FunCoup" id="Q89KZ8">
    <property type="interactions" value="242"/>
</dbReference>
<dbReference type="STRING" id="224911.AAV28_21040"/>
<dbReference type="EnsemblBacteria" id="BAC50015">
    <property type="protein sequence ID" value="BAC50015"/>
    <property type="gene ID" value="BAC50015"/>
</dbReference>
<dbReference type="GeneID" id="46491757"/>
<dbReference type="KEGG" id="bja:bll4750"/>
<dbReference type="PATRIC" id="fig|224911.44.peg.4583"/>
<dbReference type="eggNOG" id="COG1826">
    <property type="taxonomic scope" value="Bacteria"/>
</dbReference>
<dbReference type="HOGENOM" id="CLU_086034_1_3_5"/>
<dbReference type="InParanoid" id="Q89KZ8"/>
<dbReference type="OrthoDB" id="7206969at2"/>
<dbReference type="PhylomeDB" id="Q89KZ8"/>
<dbReference type="Proteomes" id="UP000002526">
    <property type="component" value="Chromosome"/>
</dbReference>
<dbReference type="GO" id="GO:0033281">
    <property type="term" value="C:TAT protein transport complex"/>
    <property type="evidence" value="ECO:0007669"/>
    <property type="project" value="UniProtKB-UniRule"/>
</dbReference>
<dbReference type="GO" id="GO:0008320">
    <property type="term" value="F:protein transmembrane transporter activity"/>
    <property type="evidence" value="ECO:0007669"/>
    <property type="project" value="UniProtKB-UniRule"/>
</dbReference>
<dbReference type="GO" id="GO:0043953">
    <property type="term" value="P:protein transport by the Tat complex"/>
    <property type="evidence" value="ECO:0007669"/>
    <property type="project" value="UniProtKB-UniRule"/>
</dbReference>
<dbReference type="Gene3D" id="1.20.5.3310">
    <property type="match status" value="1"/>
</dbReference>
<dbReference type="HAMAP" id="MF_00237">
    <property type="entry name" value="TatB"/>
    <property type="match status" value="1"/>
</dbReference>
<dbReference type="InterPro" id="IPR018448">
    <property type="entry name" value="TatB"/>
</dbReference>
<dbReference type="NCBIfam" id="TIGR01410">
    <property type="entry name" value="tatB"/>
    <property type="match status" value="1"/>
</dbReference>
<dbReference type="PANTHER" id="PTHR33162">
    <property type="entry name" value="SEC-INDEPENDENT PROTEIN TRANSLOCASE PROTEIN TATA, CHLOROPLASTIC"/>
    <property type="match status" value="1"/>
</dbReference>
<dbReference type="PANTHER" id="PTHR33162:SF1">
    <property type="entry name" value="SEC-INDEPENDENT PROTEIN TRANSLOCASE PROTEIN TATA, CHLOROPLASTIC"/>
    <property type="match status" value="1"/>
</dbReference>
<dbReference type="PRINTS" id="PR01506">
    <property type="entry name" value="TATBPROTEIN"/>
</dbReference>
<gene>
    <name evidence="1" type="primary">tatB</name>
    <name type="ordered locus">bll4750</name>
</gene>
<proteinExistence type="inferred from homology"/>
<accession>Q89KZ8</accession>
<keyword id="KW-0997">Cell inner membrane</keyword>
<keyword id="KW-1003">Cell membrane</keyword>
<keyword id="KW-0472">Membrane</keyword>
<keyword id="KW-0653">Protein transport</keyword>
<keyword id="KW-1185">Reference proteome</keyword>
<keyword id="KW-0811">Translocation</keyword>
<keyword id="KW-0812">Transmembrane</keyword>
<keyword id="KW-1133">Transmembrane helix</keyword>
<keyword id="KW-0813">Transport</keyword>
<reference key="1">
    <citation type="journal article" date="2002" name="DNA Res.">
        <title>Complete genomic sequence of nitrogen-fixing symbiotic bacterium Bradyrhizobium japonicum USDA110.</title>
        <authorList>
            <person name="Kaneko T."/>
            <person name="Nakamura Y."/>
            <person name="Sato S."/>
            <person name="Minamisawa K."/>
            <person name="Uchiumi T."/>
            <person name="Sasamoto S."/>
            <person name="Watanabe A."/>
            <person name="Idesawa K."/>
            <person name="Iriguchi M."/>
            <person name="Kawashima K."/>
            <person name="Kohara M."/>
            <person name="Matsumoto M."/>
            <person name="Shimpo S."/>
            <person name="Tsuruoka H."/>
            <person name="Wada T."/>
            <person name="Yamada M."/>
            <person name="Tabata S."/>
        </authorList>
    </citation>
    <scope>NUCLEOTIDE SEQUENCE [LARGE SCALE GENOMIC DNA]</scope>
    <source>
        <strain>JCM 10833 / BCRC 13528 / IAM 13628 / NBRC 14792 / USDA 110</strain>
    </source>
</reference>
<comment type="function">
    <text evidence="1">Part of the twin-arginine translocation (Tat) system that transports large folded proteins containing a characteristic twin-arginine motif in their signal peptide across membranes. Together with TatC, TatB is part of a receptor directly interacting with Tat signal peptides. TatB may form an oligomeric binding site that transiently accommodates folded Tat precursor proteins before their translocation.</text>
</comment>
<comment type="subunit">
    <text evidence="1">The Tat system comprises two distinct complexes: a TatABC complex, containing multiple copies of TatA, TatB and TatC subunits, and a separate TatA complex, containing only TatA subunits. Substrates initially bind to the TatABC complex, which probably triggers association of the separate TatA complex to form the active translocon.</text>
</comment>
<comment type="subcellular location">
    <subcellularLocation>
        <location evidence="1">Cell inner membrane</location>
        <topology evidence="1">Single-pass membrane protein</topology>
    </subcellularLocation>
</comment>
<comment type="similarity">
    <text evidence="1">Belongs to the TatB family.</text>
</comment>
<organism>
    <name type="scientific">Bradyrhizobium diazoefficiens (strain JCM 10833 / BCRC 13528 / IAM 13628 / NBRC 14792 / USDA 110)</name>
    <dbReference type="NCBI Taxonomy" id="224911"/>
    <lineage>
        <taxon>Bacteria</taxon>
        <taxon>Pseudomonadati</taxon>
        <taxon>Pseudomonadota</taxon>
        <taxon>Alphaproteobacteria</taxon>
        <taxon>Hyphomicrobiales</taxon>
        <taxon>Nitrobacteraceae</taxon>
        <taxon>Bradyrhizobium</taxon>
    </lineage>
</organism>
<name>TATB_BRADU</name>
<protein>
    <recommendedName>
        <fullName evidence="1">Sec-independent protein translocase protein TatB</fullName>
    </recommendedName>
</protein>